<comment type="function">
    <molecule>Glycoprotein N</molecule>
    <text evidence="1 2 3 10">Structural component of the virion that interacts with glycoprotein C (By similarity). It shields the hydrophobic fusion loops of the glycoprotein C, preventing premature fusion (By similarity). The glycoprotein protrusions are arranged on an icosahedral lattice, with T=12 triangulation (By similarity). They are able to attach the virion to the host cell receptor CD209/DC-SIGN and to promote fusion of membranes with the late endosome after endocytosis of the virion (Probable). Plays a role in the packaging of ribonucleoproteins during virus assembly (By similarity).</text>
</comment>
<comment type="function">
    <molecule>Glycoprotein C</molecule>
    <text evidence="1 2 7 10">Structural component of the virion that interacts with glycoprotein N (By similarity). Acts as a class II fusion protein that is activated upon acidification and subsequent repositioning of the glycoprotein N (PubMed:29070692). The glycoprotein protrusions are arranged on an icosahedral lattice, with T=12 triangulation (By similarity). They are able to attach the virion to the host cell receptor CD209/DC-SIGN and to promote fusion of membranes with the late endosome after endocytosis of the virion (Probable).</text>
</comment>
<comment type="subunit">
    <molecule>Glycoprotein N</molecule>
    <text evidence="1">Heterodimer with glycoprotein C.</text>
</comment>
<comment type="subunit">
    <molecule>Glycoprotein C</molecule>
    <text evidence="1 7">Heterodimer with glycoprotein N (By similarity). Homotrimer (postfusion) (PubMed:29070692).</text>
</comment>
<comment type="subcellular location">
    <molecule>Glycoprotein N</molecule>
    <subcellularLocation>
        <location evidence="2">Virion membrane</location>
        <topology evidence="2">Single-pass type I membrane protein</topology>
    </subcellularLocation>
    <subcellularLocation>
        <location evidence="1">Host Golgi apparatus membrane</location>
        <topology evidence="2">Single-pass type I membrane protein</topology>
    </subcellularLocation>
    <subcellularLocation>
        <location evidence="2">Host endoplasmic reticulum membrane</location>
        <topology evidence="2">Single-pass type I membrane protein</topology>
    </subcellularLocation>
    <text evidence="2">Interaction between Glycoprotein N and Glycoprotein C is essential for proper targeting of Glycoprotein C to the Golgi complex, where virion budding occurs.</text>
</comment>
<comment type="subcellular location">
    <molecule>Glycoprotein C</molecule>
    <subcellularLocation>
        <location evidence="2">Virion membrane</location>
        <topology evidence="2">Single-pass type I membrane protein</topology>
    </subcellularLocation>
    <subcellularLocation>
        <location evidence="1">Host Golgi apparatus membrane</location>
        <topology evidence="2">Single-pass type I membrane protein</topology>
    </subcellularLocation>
    <text evidence="2">Interaction between Glycoprotein N and Glycoprotein C is essential for proper targeting of Glycoprotein C to the Golgi complex, where virion budding occurs.</text>
</comment>
<comment type="domain">
    <molecule>Glycoprotein N</molecule>
    <text evidence="2">Contains a Golgi retention signal on its C-terminus. The cytoplasmic tail specifically interacts with the ribonucleoproteins and is critical for genome packaging.</text>
</comment>
<comment type="PTM">
    <molecule>Envelopment polyprotein</molecule>
    <text evidence="3">Specific enzymatic cleavages in vivo yield mature proteins Glycoprotein C, and Glycoprotein N.</text>
</comment>
<comment type="PTM">
    <molecule>Glycoprotein N</molecule>
    <text evidence="2">Glycosylated.</text>
</comment>
<comment type="PTM">
    <molecule>Glycoprotein C</molecule>
    <text evidence="2">Glycosylated.</text>
</comment>
<comment type="PTM">
    <molecule>Glycoprotein C</molecule>
    <text evidence="2">Palmitoylated.</text>
</comment>
<comment type="miscellaneous">
    <text evidence="9">The sequence shown is that of isolate Human/United States/1/2009.</text>
</comment>
<comment type="similarity">
    <text evidence="9">Belongs to the phlebovirus envelope glycoprotein family.</text>
</comment>
<evidence type="ECO:0000250" key="1">
    <source>
        <dbReference type="UniProtKB" id="P03518"/>
    </source>
</evidence>
<evidence type="ECO:0000250" key="2">
    <source>
        <dbReference type="UniProtKB" id="P09613"/>
    </source>
</evidence>
<evidence type="ECO:0000250" key="3">
    <source>
        <dbReference type="UniProtKB" id="P21401"/>
    </source>
</evidence>
<evidence type="ECO:0000250" key="4">
    <source>
        <dbReference type="UniProtKB" id="R4V2Q5"/>
    </source>
</evidence>
<evidence type="ECO:0000255" key="5"/>
<evidence type="ECO:0000255" key="6">
    <source>
        <dbReference type="PROSITE-ProRule" id="PRU00498"/>
    </source>
</evidence>
<evidence type="ECO:0000269" key="7">
    <source>
    </source>
</evidence>
<evidence type="ECO:0000269" key="8">
    <source ref="1"/>
</evidence>
<evidence type="ECO:0000305" key="9"/>
<evidence type="ECO:0000305" key="10">
    <source>
    </source>
</evidence>
<evidence type="ECO:0007829" key="11">
    <source>
        <dbReference type="PDB" id="5YOW"/>
    </source>
</evidence>
<sequence>MIVPIVLFLTLCPSELSAWGSPGDPIVCGVRTETNKSIQIEWKEGRSEKLCQIDRLGHVTSWLRNHSSFQGLIGQVKGRPSVSYFPEGASYPRWSGLLSPCDAEWLGLIAVSKAGDTDMIVPGPTYKGKIFVERPTYNGYKGWGCADGKSLSHSGTYCETDSSVSSGLIQGDRVLWVGEVVCQRGTPVPEDVFSELVSLSQSEFPDVCKIDGVALNQCEQESIPQPLDVAWIDVGRSHKVLMREHKTKWVQESSAKDFVCFKVGQGPCSKQEEDDCMSKGNCHGDEVFCRMAGCSARMQDNQEGCRCELLQKPGEIIVNYGGVSVRPTCYGFSRMMATLEVHKPDRELTGCTGCHLECIEGGVKIVTLTSELRSATVCASHFCASAKGGSKTTDILFHTGALVGPNSIRITGQLLDGSKFSFDGHCIFPDGCMALDCTFCKEFLRNPQCYPVKKWLFLVVVIMCCYCALMLLTNILRAIGVWGTWVFAPIKLALALGLRLAKLSKKGLVAVVTRGQMIVNDELHQVRVERGEQNEGRQGYGPRGPIRHWLYSPALILILTTSICSGCDELVHAESKSITCKSASGNEKECSVTGRALLPAVNPGQEACLHFSVPGSPDSKCLKIKVKSINLRCKQASSYYVPEAKARCTSVRRCRWAGDCQSGCPTYFSSNSFSDDWANRMDRAGLGMSGCSDGCGGAACGCFNAAPSCIFWRKWVENPSNRVWKVSPCASWVLAATIELTLPSGEVKTLEPVTGQATQMFKGVAITYLGSSIEIVGMTRLCEMKEMGTGIMALAPCNDPGHAIMGNVGEIQCSSIESAKHIRSDGCIWNADLVGIELRVDDAVCFSKLTSVEAVANFSKIPATISGVRFDQGNHGESRIYGSPLDITRVSGEFSVSFRGMRLKLSEISASCTGEITNVSGCYSCMTGASVSIKLHSSKNTTGHLKCDSDETAFSVMEGTHTYRPHMSFDKAVIDEECVLNCGGHSSKLLLKGSLVFMDVPRFVDGSYVQTYHSKVPAGGRVPNPVDWLNALFGDGITRWILGIIGVLLACVMLFVVVVAITRRLIKGLTQRAKVA</sequence>
<name>GP_HTRV</name>
<keyword id="KW-0002">3D-structure</keyword>
<keyword id="KW-1015">Disulfide bond</keyword>
<keyword id="KW-1170">Fusion of virus membrane with host endosomal membrane</keyword>
<keyword id="KW-1168">Fusion of virus membrane with host membrane</keyword>
<keyword id="KW-0325">Glycoprotein</keyword>
<keyword id="KW-1038">Host endoplasmic reticulum</keyword>
<keyword id="KW-1040">Host Golgi apparatus</keyword>
<keyword id="KW-1043">Host membrane</keyword>
<keyword id="KW-0945">Host-virus interaction</keyword>
<keyword id="KW-0449">Lipoprotein</keyword>
<keyword id="KW-0472">Membrane</keyword>
<keyword id="KW-0564">Palmitate</keyword>
<keyword id="KW-0732">Signal</keyword>
<keyword id="KW-0812">Transmembrane</keyword>
<keyword id="KW-1133">Transmembrane helix</keyword>
<keyword id="KW-1161">Viral attachment to host cell</keyword>
<keyword id="KW-1162">Viral penetration into host cytoplasm</keyword>
<keyword id="KW-0946">Virion</keyword>
<keyword id="KW-1160">Virus entry into host cell</keyword>
<feature type="signal peptide" evidence="5">
    <location>
        <begin position="1"/>
        <end position="18"/>
    </location>
</feature>
<feature type="chain" id="PRO_0000455547" description="Envelopment polyprotein" evidence="5">
    <location>
        <begin position="19"/>
        <end position="1076"/>
    </location>
</feature>
<feature type="chain" id="PRO_0000455548" description="Glycoprotein N" evidence="5">
    <location>
        <begin position="19"/>
        <end position="566"/>
    </location>
</feature>
<feature type="chain" id="PRO_0000455549" description="Glycoprotein C" evidence="5">
    <location>
        <begin position="567"/>
        <end position="1076"/>
    </location>
</feature>
<feature type="topological domain" description="Lumenal" evidence="2">
    <location>
        <begin position="19"/>
        <end position="455"/>
    </location>
</feature>
<feature type="transmembrane region" description="Helical" evidence="5">
    <location>
        <begin position="456"/>
        <end position="476"/>
    </location>
</feature>
<feature type="topological domain" description="Cytoplasmic" evidence="2">
    <location>
        <begin position="477"/>
        <end position="539"/>
    </location>
</feature>
<feature type="topological domain" description="Lumenal" evidence="5">
    <location>
        <begin position="567"/>
        <end position="1040"/>
    </location>
</feature>
<feature type="transmembrane region" description="Helical" evidence="5">
    <location>
        <begin position="1041"/>
        <end position="1061"/>
    </location>
</feature>
<feature type="topological domain" description="Cytoplasmic" evidence="2">
    <location>
        <begin position="1062"/>
        <end position="1076"/>
    </location>
</feature>
<feature type="region of interest" description="Golgi retention signal" evidence="2">
    <location>
        <begin position="477"/>
        <end position="523"/>
    </location>
</feature>
<feature type="region of interest" description="Internal signal sequence for glycoprotein C" evidence="2">
    <location>
        <begin position="544"/>
        <end position="566"/>
    </location>
</feature>
<feature type="region of interest" description="Fusion loop" evidence="4">
    <location>
        <begin position="654"/>
        <end position="660"/>
    </location>
</feature>
<feature type="region of interest" description="Fusion loop" evidence="7">
    <location>
        <begin position="695"/>
        <end position="709"/>
    </location>
</feature>
<feature type="site" description="Cleavage; by host signal peptidase" evidence="3">
    <location>
        <begin position="103"/>
        <end position="104"/>
    </location>
</feature>
<feature type="site" description="Cleavage; by host signal peptidase" evidence="2">
    <location>
        <begin position="566"/>
        <end position="567"/>
    </location>
</feature>
<feature type="site" description="Important for glycoprotein C and glycoprotein N subcellular location" evidence="2">
    <location>
        <position position="1074"/>
    </location>
</feature>
<feature type="glycosylation site" description="N-linked (GlcNAc...) asparagine; by host" evidence="6">
    <location>
        <position position="857"/>
    </location>
</feature>
<feature type="glycosylation site" description="N-linked (GlcNAc...) asparagine; by host" evidence="6">
    <location>
        <position position="918"/>
    </location>
</feature>
<feature type="glycosylation site" description="N-linked (GlcNAc...) asparagine; by host" evidence="6">
    <location>
        <position position="940"/>
    </location>
</feature>
<feature type="disulfide bond" evidence="4">
    <location>
        <begin position="28"/>
        <end position="51"/>
    </location>
</feature>
<feature type="disulfide bond" evidence="4">
    <location>
        <begin position="145"/>
        <end position="158"/>
    </location>
</feature>
<feature type="disulfide bond" evidence="4">
    <location>
        <begin position="182"/>
        <end position="329"/>
    </location>
</feature>
<feature type="disulfide bond" evidence="4">
    <location>
        <begin position="208"/>
        <end position="218"/>
    </location>
</feature>
<feature type="disulfide bond" evidence="4">
    <location>
        <begin position="260"/>
        <end position="307"/>
    </location>
</feature>
<feature type="disulfide bond" evidence="4">
    <location>
        <begin position="289"/>
        <end position="294"/>
    </location>
</feature>
<feature type="disulfide bond" evidence="4">
    <location>
        <begin position="351"/>
        <end position="354"/>
    </location>
</feature>
<feature type="disulfide bond" evidence="4">
    <location>
        <begin position="358"/>
        <end position="426"/>
    </location>
</feature>
<feature type="disulfide bond" evidence="4">
    <location>
        <begin position="378"/>
        <end position="383"/>
    </location>
</feature>
<feature type="disulfide bond" evidence="3">
    <location>
        <begin position="567"/>
        <end position="608"/>
    </location>
</feature>
<feature type="disulfide bond" evidence="3">
    <location>
        <begin position="580"/>
        <end position="590"/>
    </location>
</feature>
<feature type="disulfide bond" evidence="3">
    <location>
        <begin position="633"/>
        <end position="729"/>
    </location>
</feature>
<feature type="disulfide bond" evidence="3">
    <location>
        <begin position="648"/>
        <end position="845"/>
    </location>
</feature>
<feature type="disulfide bond" evidence="3">
    <location>
        <begin position="654"/>
        <end position="702"/>
    </location>
</feature>
<feature type="disulfide bond" evidence="3">
    <location>
        <begin position="660"/>
        <end position="709"/>
    </location>
</feature>
<feature type="disulfide bond" evidence="3">
    <location>
        <begin position="664"/>
        <end position="691"/>
    </location>
</feature>
<feature type="disulfide bond" evidence="3">
    <location>
        <begin position="695"/>
        <end position="700"/>
    </location>
</feature>
<feature type="disulfide bond" evidence="4">
    <location>
        <begin position="782"/>
        <end position="797"/>
    </location>
</feature>
<feature type="disulfide bond" evidence="3">
    <location>
        <begin position="813"/>
        <end position="827"/>
    </location>
</feature>
<feature type="disulfide bond" evidence="3">
    <location>
        <begin position="912"/>
        <end position="982"/>
    </location>
</feature>
<feature type="disulfide bond" evidence="3">
    <location>
        <begin position="922"/>
        <end position="925"/>
    </location>
</feature>
<feature type="sequence variant" evidence="7">
    <original>VPIVLFL</original>
    <variation>APVVLFF</variation>
    <location>
        <begin position="3"/>
        <end position="9"/>
    </location>
</feature>
<feature type="sequence variant" description="In strain: Isolate Human/United States/2/2009." evidence="8">
    <original>E</original>
    <variation>Q</variation>
    <location>
        <position position="15"/>
    </location>
</feature>
<feature type="sequence variant" description="In strain: Isolate Human/United States/2/2009." evidence="8">
    <original>V</original>
    <variation>I</variation>
    <location>
        <position position="197"/>
    </location>
</feature>
<feature type="sequence variant" description="In strain: Isolate Human/United States/2/2009." evidence="8">
    <original>I</original>
    <variation>V</variation>
    <location>
        <position position="210"/>
    </location>
</feature>
<feature type="sequence variant" description="In strain: Isolate Human/United States/2/2009." evidence="8">
    <original>N</original>
    <variation>K</variation>
    <location>
        <position position="406"/>
    </location>
</feature>
<feature type="sequence variant" description="In strain: Isolate Human/United States/2/2009." evidence="8">
    <original>I</original>
    <variation>V</variation>
    <location>
        <position position="462"/>
    </location>
</feature>
<feature type="sequence variant" description="In strain: Isolate Human/United States/2/2009." evidence="8">
    <original>A</original>
    <variation>V</variation>
    <location>
        <position position="493"/>
    </location>
</feature>
<feature type="sequence variant" description="In strain: Isolate Human/United States/2/2009." evidence="8">
    <original>V</original>
    <variation>I</variation>
    <location>
        <position position="526"/>
    </location>
</feature>
<feature type="sequence variant" description="In strain: Isolate Human/United States/2/2009." evidence="8">
    <original>QGY</original>
    <variation>LGH</variation>
    <location>
        <begin position="538"/>
        <end position="540"/>
    </location>
</feature>
<feature type="sequence variant" description="In strain: Isolate Human/United States/2/2009." evidence="8">
    <original>I</original>
    <variation>V</variation>
    <location>
        <position position="546"/>
    </location>
</feature>
<feature type="sequence variant" description="In strain: Isolate Human/United States/2/2009." evidence="8">
    <original>V</original>
    <variation>M</variation>
    <location>
        <position position="613"/>
    </location>
</feature>
<feature type="sequence variant" description="In strain: Isolate Human/United States/2/2009." evidence="8">
    <original>T</original>
    <variation>I</variation>
    <location>
        <position position="737"/>
    </location>
</feature>
<feature type="sequence variant" description="In strain: Isolate Human/United States/2/2009." evidence="8">
    <original>T</original>
    <variation>I</variation>
    <location>
        <position position="864"/>
    </location>
</feature>
<feature type="sequence variant" description="In strain: Isolate Human/United States/2/2009." evidence="8">
    <original>R</original>
    <variation>K</variation>
    <location>
        <position position="889"/>
    </location>
</feature>
<feature type="sequence variant" description="In strain: Isolate Human/United States/2/2009." evidence="8">
    <original>I</original>
    <variation>V</variation>
    <location>
        <position position="974"/>
    </location>
</feature>
<feature type="sequence variant" description="In strain: Isolate Human/United States/2/2009." evidence="8">
    <original>M</original>
    <variation>L</variation>
    <location>
        <position position="1053"/>
    </location>
</feature>
<feature type="strand" evidence="11">
    <location>
        <begin position="573"/>
        <end position="581"/>
    </location>
</feature>
<feature type="strand" evidence="11">
    <location>
        <begin position="589"/>
        <end position="601"/>
    </location>
</feature>
<feature type="strand" evidence="11">
    <location>
        <begin position="606"/>
        <end position="612"/>
    </location>
</feature>
<feature type="strand" evidence="11">
    <location>
        <begin position="622"/>
        <end position="635"/>
    </location>
</feature>
<feature type="strand" evidence="11">
    <location>
        <begin position="639"/>
        <end position="642"/>
    </location>
</feature>
<feature type="strand" evidence="11">
    <location>
        <begin position="645"/>
        <end position="653"/>
    </location>
</feature>
<feature type="strand" evidence="11">
    <location>
        <begin position="685"/>
        <end position="694"/>
    </location>
</feature>
<feature type="helix" evidence="11">
    <location>
        <begin position="698"/>
        <end position="700"/>
    </location>
</feature>
<feature type="strand" evidence="11">
    <location>
        <begin position="708"/>
        <end position="717"/>
    </location>
</feature>
<feature type="strand" evidence="11">
    <location>
        <begin position="723"/>
        <end position="741"/>
    </location>
</feature>
<feature type="strand" evidence="11">
    <location>
        <begin position="747"/>
        <end position="750"/>
    </location>
</feature>
<feature type="strand" evidence="11">
    <location>
        <begin position="758"/>
        <end position="761"/>
    </location>
</feature>
<feature type="strand" evidence="11">
    <location>
        <begin position="764"/>
        <end position="773"/>
    </location>
</feature>
<feature type="strand" evidence="11">
    <location>
        <begin position="782"/>
        <end position="786"/>
    </location>
</feature>
<feature type="turn" evidence="11">
    <location>
        <begin position="787"/>
        <end position="789"/>
    </location>
</feature>
<feature type="strand" evidence="11">
    <location>
        <begin position="792"/>
        <end position="795"/>
    </location>
</feature>
<feature type="strand" evidence="11">
    <location>
        <begin position="810"/>
        <end position="815"/>
    </location>
</feature>
<feature type="helix" evidence="11">
    <location>
        <begin position="816"/>
        <end position="820"/>
    </location>
</feature>
<feature type="turn" evidence="11">
    <location>
        <begin position="824"/>
        <end position="826"/>
    </location>
</feature>
<feature type="helix" evidence="11">
    <location>
        <begin position="831"/>
        <end position="833"/>
    </location>
</feature>
<feature type="strand" evidence="11">
    <location>
        <begin position="834"/>
        <end position="838"/>
    </location>
</feature>
<feature type="strand" evidence="11">
    <location>
        <begin position="843"/>
        <end position="847"/>
    </location>
</feature>
<feature type="helix" evidence="11">
    <location>
        <begin position="852"/>
        <end position="858"/>
    </location>
</feature>
<feature type="strand" evidence="11">
    <location>
        <begin position="860"/>
        <end position="865"/>
    </location>
</feature>
<feature type="strand" evidence="11">
    <location>
        <begin position="868"/>
        <end position="872"/>
    </location>
</feature>
<feature type="strand" evidence="11">
    <location>
        <begin position="880"/>
        <end position="886"/>
    </location>
</feature>
<feature type="helix" evidence="11">
    <location>
        <begin position="887"/>
        <end position="889"/>
    </location>
</feature>
<feature type="strand" evidence="11">
    <location>
        <begin position="890"/>
        <end position="900"/>
    </location>
</feature>
<feature type="strand" evidence="11">
    <location>
        <begin position="902"/>
        <end position="905"/>
    </location>
</feature>
<feature type="strand" evidence="11">
    <location>
        <begin position="912"/>
        <end position="927"/>
    </location>
</feature>
<feature type="strand" evidence="11">
    <location>
        <begin position="929"/>
        <end position="949"/>
    </location>
</feature>
<feature type="strand" evidence="11">
    <location>
        <begin position="951"/>
        <end position="956"/>
    </location>
</feature>
<feature type="strand" evidence="11">
    <location>
        <begin position="958"/>
        <end position="963"/>
    </location>
</feature>
<feature type="strand" evidence="11">
    <location>
        <begin position="970"/>
        <end position="982"/>
    </location>
</feature>
<feature type="strand" evidence="11">
    <location>
        <begin position="985"/>
        <end position="997"/>
    </location>
</feature>
<proteinExistence type="evidence at protein level"/>
<organismHost>
    <name type="scientific">Alces americanus</name>
    <name type="common">American moose</name>
    <dbReference type="NCBI Taxonomy" id="999462"/>
</organismHost>
<organismHost>
    <name type="scientific">Amblyomma americanum</name>
    <name type="common">Lone star tick</name>
    <dbReference type="NCBI Taxonomy" id="6943"/>
</organismHost>
<organismHost>
    <name type="scientific">Canis latrans</name>
    <name type="common">Coyote</name>
    <dbReference type="NCBI Taxonomy" id="9614"/>
</organismHost>
<organismHost>
    <name type="scientific">Didelphis virginiana</name>
    <name type="common">North American opossum</name>
    <name type="synonym">Didelphis marsupialis virginiana</name>
    <dbReference type="NCBI Taxonomy" id="9267"/>
</organismHost>
<organismHost>
    <name type="scientific">Equus caballus</name>
    <name type="common">Horse</name>
    <dbReference type="NCBI Taxonomy" id="9796"/>
</organismHost>
<organismHost>
    <name type="scientific">Homo sapiens</name>
    <name type="common">Human</name>
    <dbReference type="NCBI Taxonomy" id="9606"/>
</organismHost>
<organismHost>
    <name type="scientific">Odocoileus virginianus</name>
    <name type="common">White-tailed deer</name>
    <dbReference type="NCBI Taxonomy" id="9874"/>
</organismHost>
<organismHost>
    <name type="scientific">Procyon lotor</name>
    <name type="common">Raccoon</name>
    <dbReference type="NCBI Taxonomy" id="9654"/>
</organismHost>
<reference key="1">
    <citation type="journal article" date="2012" name="N. Engl. J. Med.">
        <title>A newly discovered phlebovirus associated with severe febrile illness following tick bite in two patients in Missouri.</title>
        <authorList>
            <person name="McMullan L.K."/>
            <person name="Folk S.M."/>
            <person name="Kelly A.J."/>
            <person name="MacNeil A."/>
            <person name="Goldsmith C.S."/>
            <person name="Metcalfe M.G."/>
            <person name="Batten B.C."/>
            <person name="Albarino C.G."/>
            <person name="Zaki S.R."/>
            <person name="Rollin P.E."/>
            <person name="Nicholson W.L."/>
            <person name="Nichol S.T."/>
        </authorList>
    </citation>
    <scope>NUCLEOTIDE SEQUENCE [GENOMIC DNA]</scope>
    <source>
        <strain>Isolate Human/United States/1/2009</strain>
        <strain>Isolate Human/United States/2/2009</strain>
    </source>
</reference>
<reference key="2">
    <citation type="journal article" date="2021" name="Virology">
        <title>Characterization of pseudotyped vesicular stomatitis virus bearing the heartland virus envelope glycoprotein.</title>
        <authorList>
            <person name="Kimura M."/>
            <person name="Egawa K."/>
            <person name="Ozawa T."/>
            <person name="Kishi H."/>
            <person name="Shimojima M."/>
            <person name="Taniguchi S."/>
            <person name="Fukushi S."/>
            <person name="Fujii H."/>
            <person name="Yamada H."/>
            <person name="Tan L."/>
            <person name="Sano K."/>
            <person name="Katano H."/>
            <person name="Suzuki T."/>
            <person name="Morikawa S."/>
            <person name="Saijo M."/>
            <person name="Tani H."/>
        </authorList>
    </citation>
    <scope>FUNCTION (GLYCOPROTEIN N)</scope>
    <scope>FUNCTION (GLYCOPROTEIN C)</scope>
</reference>
<reference evidence="11" key="3">
    <citation type="journal article" date="2017" name="J. Virol.">
        <title>The Postfusion Structure of the Heartland Virus Gc Glycoprotein Supports Taxonomic Separation of the Bunyaviral Families Phenuiviridae and Hantaviridae.</title>
        <authorList>
            <person name="Zhu Y."/>
            <person name="Wu Y."/>
            <person name="Chai Y."/>
            <person name="Qi J."/>
            <person name="Peng R."/>
            <person name="Feng W.H."/>
            <person name="Gao G.F."/>
        </authorList>
    </citation>
    <scope>X-RAY CRYSTALLOGRAPHY (2.10 ANGSTROMS) OF 567-998</scope>
    <scope>DISULFIDE BONDS</scope>
    <scope>FUNCTION (GLYCOPROTEIN C)</scope>
    <scope>SUBUNIT (GLYCOPROTEIN C)</scope>
</reference>
<dbReference type="EMBL" id="JX005844">
    <property type="protein sequence ID" value="AFP33393.1"/>
    <property type="molecule type" value="Genomic_RNA"/>
</dbReference>
<dbReference type="EMBL" id="JX005845">
    <property type="protein sequence ID" value="AFP33394.1"/>
    <property type="molecule type" value="Genomic_RNA"/>
</dbReference>
<dbReference type="RefSeq" id="YP_009047241.1">
    <property type="nucleotide sequence ID" value="NC_024494.1"/>
</dbReference>
<dbReference type="PDB" id="5YOW">
    <property type="method" value="X-ray"/>
    <property type="resolution" value="2.10 A"/>
    <property type="chains" value="A=567-998"/>
</dbReference>
<dbReference type="PDBsum" id="5YOW"/>
<dbReference type="SMR" id="J3WAX0"/>
<dbReference type="GlyCosmos" id="J3WAX0">
    <property type="glycosylation" value="3 sites, No reported glycans"/>
</dbReference>
<dbReference type="KEGG" id="vg:19893498"/>
<dbReference type="Proteomes" id="UP000173982">
    <property type="component" value="Genome"/>
</dbReference>
<dbReference type="Proteomes" id="UP000203778">
    <property type="component" value="Genome"/>
</dbReference>
<dbReference type="GO" id="GO:0044167">
    <property type="term" value="C:host cell endoplasmic reticulum membrane"/>
    <property type="evidence" value="ECO:0007669"/>
    <property type="project" value="UniProtKB-SubCell"/>
</dbReference>
<dbReference type="GO" id="GO:0044178">
    <property type="term" value="C:host cell Golgi membrane"/>
    <property type="evidence" value="ECO:0007669"/>
    <property type="project" value="UniProtKB-SubCell"/>
</dbReference>
<dbReference type="GO" id="GO:0016020">
    <property type="term" value="C:membrane"/>
    <property type="evidence" value="ECO:0007669"/>
    <property type="project" value="UniProtKB-KW"/>
</dbReference>
<dbReference type="GO" id="GO:0055036">
    <property type="term" value="C:virion membrane"/>
    <property type="evidence" value="ECO:0007669"/>
    <property type="project" value="UniProtKB-SubCell"/>
</dbReference>
<dbReference type="GO" id="GO:0039654">
    <property type="term" value="P:fusion of virus membrane with host endosome membrane"/>
    <property type="evidence" value="ECO:0007669"/>
    <property type="project" value="UniProtKB-KW"/>
</dbReference>
<dbReference type="GO" id="GO:0046718">
    <property type="term" value="P:symbiont entry into host cell"/>
    <property type="evidence" value="ECO:0007669"/>
    <property type="project" value="UniProtKB-KW"/>
</dbReference>
<dbReference type="GO" id="GO:0019062">
    <property type="term" value="P:virion attachment to host cell"/>
    <property type="evidence" value="ECO:0007669"/>
    <property type="project" value="UniProtKB-KW"/>
</dbReference>
<dbReference type="Gene3D" id="2.60.40.3770">
    <property type="match status" value="1"/>
</dbReference>
<dbReference type="Gene3D" id="2.60.98.50">
    <property type="match status" value="1"/>
</dbReference>
<dbReference type="InterPro" id="IPR043603">
    <property type="entry name" value="Phlebo_G2_C"/>
</dbReference>
<dbReference type="InterPro" id="IPR010826">
    <property type="entry name" value="Phlebovirus_G1"/>
</dbReference>
<dbReference type="InterPro" id="IPR009878">
    <property type="entry name" value="Phlebovirus_G2_fusion"/>
</dbReference>
<dbReference type="Pfam" id="PF19019">
    <property type="entry name" value="Phlebo_G2_C"/>
    <property type="match status" value="1"/>
</dbReference>
<dbReference type="Pfam" id="PF07243">
    <property type="entry name" value="Phlebovirus_G1"/>
    <property type="match status" value="1"/>
</dbReference>
<dbReference type="Pfam" id="PF07245">
    <property type="entry name" value="Phlebovirus_G2"/>
    <property type="match status" value="1"/>
</dbReference>
<accession>J3WAX0</accession>
<accession>J3SPZ8</accession>
<organism>
    <name type="scientific">Heartland virus</name>
    <name type="common">HTRV</name>
    <dbReference type="NCBI Taxonomy" id="1216928"/>
    <lineage>
        <taxon>Viruses</taxon>
        <taxon>Riboviria</taxon>
        <taxon>Orthornavirae</taxon>
        <taxon>Negarnaviricota</taxon>
        <taxon>Polyploviricotina</taxon>
        <taxon>Ellioviricetes</taxon>
        <taxon>Bunyavirales</taxon>
        <taxon>Phenuiviridae</taxon>
        <taxon>Bandavirus</taxon>
        <taxon>Bandavirus heartlandense</taxon>
    </lineage>
</organism>
<protein>
    <recommendedName>
        <fullName>Envelopment polyprotein</fullName>
    </recommendedName>
    <alternativeName>
        <fullName>M polyprotein</fullName>
    </alternativeName>
    <component>
        <recommendedName>
            <fullName evidence="3">Glycoprotein N</fullName>
            <shortName>Gn</shortName>
        </recommendedName>
        <alternativeName>
            <fullName>Glycoprotein G1</fullName>
        </alternativeName>
    </component>
    <component>
        <recommendedName>
            <fullName evidence="3">Glycoprotein C</fullName>
            <shortName>Gc</shortName>
        </recommendedName>
        <alternativeName>
            <fullName>Glycoprotein G2</fullName>
        </alternativeName>
    </component>
</protein>
<gene>
    <name type="primary">GP</name>
</gene>